<evidence type="ECO:0000255" key="1">
    <source>
        <dbReference type="HAMAP-Rule" id="MF_00168"/>
    </source>
</evidence>
<dbReference type="EC" id="2.4.2.29" evidence="1"/>
<dbReference type="EMBL" id="AE010300">
    <property type="protein sequence ID" value="AAN50293.1"/>
    <property type="molecule type" value="Genomic_DNA"/>
</dbReference>
<dbReference type="RefSeq" id="NP_713275.1">
    <property type="nucleotide sequence ID" value="NC_004342.2"/>
</dbReference>
<dbReference type="RefSeq" id="WP_000577236.1">
    <property type="nucleotide sequence ID" value="NC_004342.2"/>
</dbReference>
<dbReference type="SMR" id="Q8CXS3"/>
<dbReference type="FunCoup" id="Q8CXS3">
    <property type="interactions" value="492"/>
</dbReference>
<dbReference type="STRING" id="189518.LA_3095"/>
<dbReference type="PaxDb" id="189518-LA_3095"/>
<dbReference type="EnsemblBacteria" id="AAN50293">
    <property type="protein sequence ID" value="AAN50293"/>
    <property type="gene ID" value="LA_3095"/>
</dbReference>
<dbReference type="GeneID" id="61144329"/>
<dbReference type="KEGG" id="lil:LA_3095"/>
<dbReference type="PATRIC" id="fig|189518.3.peg.3073"/>
<dbReference type="HOGENOM" id="CLU_022060_0_1_12"/>
<dbReference type="InParanoid" id="Q8CXS3"/>
<dbReference type="OrthoDB" id="9805417at2"/>
<dbReference type="UniPathway" id="UPA00392"/>
<dbReference type="Proteomes" id="UP000001408">
    <property type="component" value="Chromosome I"/>
</dbReference>
<dbReference type="GO" id="GO:0046872">
    <property type="term" value="F:metal ion binding"/>
    <property type="evidence" value="ECO:0007669"/>
    <property type="project" value="UniProtKB-KW"/>
</dbReference>
<dbReference type="GO" id="GO:0008479">
    <property type="term" value="F:tRNA-guanosine(34) queuine transglycosylase activity"/>
    <property type="evidence" value="ECO:0000318"/>
    <property type="project" value="GO_Central"/>
</dbReference>
<dbReference type="GO" id="GO:0008616">
    <property type="term" value="P:queuosine biosynthetic process"/>
    <property type="evidence" value="ECO:0007669"/>
    <property type="project" value="UniProtKB-UniRule"/>
</dbReference>
<dbReference type="GO" id="GO:0101030">
    <property type="term" value="P:tRNA-guanine transglycosylation"/>
    <property type="evidence" value="ECO:0000318"/>
    <property type="project" value="GO_Central"/>
</dbReference>
<dbReference type="Gene3D" id="3.20.20.105">
    <property type="entry name" value="Queuine tRNA-ribosyltransferase-like"/>
    <property type="match status" value="1"/>
</dbReference>
<dbReference type="HAMAP" id="MF_00168">
    <property type="entry name" value="Q_tRNA_Tgt"/>
    <property type="match status" value="1"/>
</dbReference>
<dbReference type="InterPro" id="IPR004803">
    <property type="entry name" value="TGT"/>
</dbReference>
<dbReference type="InterPro" id="IPR036511">
    <property type="entry name" value="TGT-like_sf"/>
</dbReference>
<dbReference type="InterPro" id="IPR002616">
    <property type="entry name" value="tRNA_ribo_trans-like"/>
</dbReference>
<dbReference type="NCBIfam" id="TIGR00430">
    <property type="entry name" value="Q_tRNA_tgt"/>
    <property type="match status" value="1"/>
</dbReference>
<dbReference type="NCBIfam" id="TIGR00449">
    <property type="entry name" value="tgt_general"/>
    <property type="match status" value="1"/>
</dbReference>
<dbReference type="PANTHER" id="PTHR43530">
    <property type="entry name" value="QUEUINE TRNA-RIBOSYLTRANSFERASE CATALYTIC SUBUNIT 1"/>
    <property type="match status" value="1"/>
</dbReference>
<dbReference type="PANTHER" id="PTHR43530:SF1">
    <property type="entry name" value="QUEUINE TRNA-RIBOSYLTRANSFERASE CATALYTIC SUBUNIT 1"/>
    <property type="match status" value="1"/>
</dbReference>
<dbReference type="Pfam" id="PF01702">
    <property type="entry name" value="TGT"/>
    <property type="match status" value="1"/>
</dbReference>
<dbReference type="SUPFAM" id="SSF51713">
    <property type="entry name" value="tRNA-guanine transglycosylase"/>
    <property type="match status" value="1"/>
</dbReference>
<organism>
    <name type="scientific">Leptospira interrogans serogroup Icterohaemorrhagiae serovar Lai (strain 56601)</name>
    <dbReference type="NCBI Taxonomy" id="189518"/>
    <lineage>
        <taxon>Bacteria</taxon>
        <taxon>Pseudomonadati</taxon>
        <taxon>Spirochaetota</taxon>
        <taxon>Spirochaetia</taxon>
        <taxon>Leptospirales</taxon>
        <taxon>Leptospiraceae</taxon>
        <taxon>Leptospira</taxon>
    </lineage>
</organism>
<gene>
    <name evidence="1" type="primary">tgt</name>
    <name type="ordered locus">LA_3095</name>
</gene>
<accession>Q8CXS3</accession>
<keyword id="KW-0328">Glycosyltransferase</keyword>
<keyword id="KW-0479">Metal-binding</keyword>
<keyword id="KW-0671">Queuosine biosynthesis</keyword>
<keyword id="KW-1185">Reference proteome</keyword>
<keyword id="KW-0808">Transferase</keyword>
<keyword id="KW-0819">tRNA processing</keyword>
<keyword id="KW-0862">Zinc</keyword>
<comment type="function">
    <text evidence="1">Catalyzes the base-exchange of a guanine (G) residue with the queuine precursor 7-aminomethyl-7-deazaguanine (PreQ1) at position 34 (anticodon wobble position) in tRNAs with GU(N) anticodons (tRNA-Asp, -Asn, -His and -Tyr). Catalysis occurs through a double-displacement mechanism. The nucleophile active site attacks the C1' of nucleotide 34 to detach the guanine base from the RNA, forming a covalent enzyme-RNA intermediate. The proton acceptor active site deprotonates the incoming PreQ1, allowing a nucleophilic attack on the C1' of the ribose to form the product. After dissociation, two additional enzymatic reactions on the tRNA convert PreQ1 to queuine (Q), resulting in the hypermodified nucleoside queuosine (7-(((4,5-cis-dihydroxy-2-cyclopenten-1-yl)amino)methyl)-7-deazaguanosine).</text>
</comment>
<comment type="catalytic activity">
    <reaction evidence="1">
        <text>7-aminomethyl-7-carbaguanine + guanosine(34) in tRNA = 7-aminomethyl-7-carbaguanosine(34) in tRNA + guanine</text>
        <dbReference type="Rhea" id="RHEA:24104"/>
        <dbReference type="Rhea" id="RHEA-COMP:10341"/>
        <dbReference type="Rhea" id="RHEA-COMP:10342"/>
        <dbReference type="ChEBI" id="CHEBI:16235"/>
        <dbReference type="ChEBI" id="CHEBI:58703"/>
        <dbReference type="ChEBI" id="CHEBI:74269"/>
        <dbReference type="ChEBI" id="CHEBI:82833"/>
        <dbReference type="EC" id="2.4.2.29"/>
    </reaction>
</comment>
<comment type="cofactor">
    <cofactor evidence="1">
        <name>Zn(2+)</name>
        <dbReference type="ChEBI" id="CHEBI:29105"/>
    </cofactor>
    <text evidence="1">Binds 1 zinc ion per subunit.</text>
</comment>
<comment type="pathway">
    <text evidence="1">tRNA modification; tRNA-queuosine biosynthesis.</text>
</comment>
<comment type="subunit">
    <text evidence="1">Homodimer. Within each dimer, one monomer is responsible for RNA recognition and catalysis, while the other monomer binds to the replacement base PreQ1.</text>
</comment>
<comment type="similarity">
    <text evidence="1">Belongs to the queuine tRNA-ribosyltransferase family.</text>
</comment>
<sequence length="374" mass="42433">MIFQTTSEDTLTKARTGILNLNGIELKTPVFMPVGTRGVVKTLSADDLEELEYSLILGNTYHLYLRPGTSVLDRFGGLKKFSTWKKALLTDSGGYQVFSLNSLFKYEQDGVRFQSHIDGSRHYFTPNSVIDIQRSIGSDIMMVLDDCAPFDSGPERLKQSLDRTHRWAEMSVQYWEKNKNSQHLFGIFQGGIDLDFRLESLNTITSLPFDGIAIGGLSVGEPRKDFIRILDGISAHTDRNRPLYLMGVGTVPDILDGVKNGVDMFDCVLPTRNARNGQVFTTLGKINLRNEKWKSSDTPMDPNCTCKVCKRYSIGYIRHLHHVGEITAFSLSTYHNLHFMKNFLTEIQNSIQKGEFLEIYAKWKNLYEKPEFSG</sequence>
<feature type="chain" id="PRO_0000135489" description="Queuine tRNA-ribosyltransferase">
    <location>
        <begin position="1"/>
        <end position="374"/>
    </location>
</feature>
<feature type="region of interest" description="RNA binding" evidence="1">
    <location>
        <begin position="247"/>
        <end position="253"/>
    </location>
</feature>
<feature type="region of interest" description="RNA binding; important for wobble base 34 recognition" evidence="1">
    <location>
        <begin position="271"/>
        <end position="275"/>
    </location>
</feature>
<feature type="active site" description="Proton acceptor" evidence="1">
    <location>
        <position position="91"/>
    </location>
</feature>
<feature type="active site" description="Nucleophile" evidence="1">
    <location>
        <position position="266"/>
    </location>
</feature>
<feature type="binding site" evidence="1">
    <location>
        <begin position="91"/>
        <end position="95"/>
    </location>
    <ligand>
        <name>substrate</name>
    </ligand>
</feature>
<feature type="binding site" evidence="1">
    <location>
        <position position="145"/>
    </location>
    <ligand>
        <name>substrate</name>
    </ligand>
</feature>
<feature type="binding site" evidence="1">
    <location>
        <position position="189"/>
    </location>
    <ligand>
        <name>substrate</name>
    </ligand>
</feature>
<feature type="binding site" evidence="1">
    <location>
        <position position="216"/>
    </location>
    <ligand>
        <name>substrate</name>
    </ligand>
</feature>
<feature type="binding site" evidence="1">
    <location>
        <position position="304"/>
    </location>
    <ligand>
        <name>Zn(2+)</name>
        <dbReference type="ChEBI" id="CHEBI:29105"/>
    </ligand>
</feature>
<feature type="binding site" evidence="1">
    <location>
        <position position="306"/>
    </location>
    <ligand>
        <name>Zn(2+)</name>
        <dbReference type="ChEBI" id="CHEBI:29105"/>
    </ligand>
</feature>
<feature type="binding site" evidence="1">
    <location>
        <position position="309"/>
    </location>
    <ligand>
        <name>Zn(2+)</name>
        <dbReference type="ChEBI" id="CHEBI:29105"/>
    </ligand>
</feature>
<feature type="binding site" evidence="1">
    <location>
        <position position="335"/>
    </location>
    <ligand>
        <name>Zn(2+)</name>
        <dbReference type="ChEBI" id="CHEBI:29105"/>
    </ligand>
</feature>
<name>TGT_LEPIN</name>
<reference key="1">
    <citation type="journal article" date="2003" name="Nature">
        <title>Unique physiological and pathogenic features of Leptospira interrogans revealed by whole-genome sequencing.</title>
        <authorList>
            <person name="Ren S.-X."/>
            <person name="Fu G."/>
            <person name="Jiang X.-G."/>
            <person name="Zeng R."/>
            <person name="Miao Y.-G."/>
            <person name="Xu H."/>
            <person name="Zhang Y.-X."/>
            <person name="Xiong H."/>
            <person name="Lu G."/>
            <person name="Lu L.-F."/>
            <person name="Jiang H.-Q."/>
            <person name="Jia J."/>
            <person name="Tu Y.-F."/>
            <person name="Jiang J.-X."/>
            <person name="Gu W.-Y."/>
            <person name="Zhang Y.-Q."/>
            <person name="Cai Z."/>
            <person name="Sheng H.-H."/>
            <person name="Yin H.-F."/>
            <person name="Zhang Y."/>
            <person name="Zhu G.-F."/>
            <person name="Wan M."/>
            <person name="Huang H.-L."/>
            <person name="Qian Z."/>
            <person name="Wang S.-Y."/>
            <person name="Ma W."/>
            <person name="Yao Z.-J."/>
            <person name="Shen Y."/>
            <person name="Qiang B.-Q."/>
            <person name="Xia Q.-C."/>
            <person name="Guo X.-K."/>
            <person name="Danchin A."/>
            <person name="Saint Girons I."/>
            <person name="Somerville R.L."/>
            <person name="Wen Y.-M."/>
            <person name="Shi M.-H."/>
            <person name="Chen Z."/>
            <person name="Xu J.-G."/>
            <person name="Zhao G.-P."/>
        </authorList>
    </citation>
    <scope>NUCLEOTIDE SEQUENCE [LARGE SCALE GENOMIC DNA]</scope>
    <source>
        <strain>56601</strain>
    </source>
</reference>
<proteinExistence type="inferred from homology"/>
<protein>
    <recommendedName>
        <fullName evidence="1">Queuine tRNA-ribosyltransferase</fullName>
        <ecNumber evidence="1">2.4.2.29</ecNumber>
    </recommendedName>
    <alternativeName>
        <fullName evidence="1">Guanine insertion enzyme</fullName>
    </alternativeName>
    <alternativeName>
        <fullName evidence="1">tRNA-guanine transglycosylase</fullName>
    </alternativeName>
</protein>